<reference key="1">
    <citation type="journal article" date="1999" name="Plant Mol. Biol.">
        <title>Early elicitor induction in members of a novel multigene family coding for highly related RING-H2 proteins in Arabidopsis thaliana.</title>
        <authorList>
            <person name="Salinas-Mondragon R.E."/>
            <person name="Garciduenas-Pina C."/>
            <person name="Guzman P."/>
        </authorList>
    </citation>
    <scope>NUCLEOTIDE SEQUENCE [MRNA]</scope>
</reference>
<reference key="2">
    <citation type="journal article" date="2000" name="Nature">
        <title>Sequence and analysis of chromosome 3 of the plant Arabidopsis thaliana.</title>
        <authorList>
            <person name="Salanoubat M."/>
            <person name="Lemcke K."/>
            <person name="Rieger M."/>
            <person name="Ansorge W."/>
            <person name="Unseld M."/>
            <person name="Fartmann B."/>
            <person name="Valle G."/>
            <person name="Bloecker H."/>
            <person name="Perez-Alonso M."/>
            <person name="Obermaier B."/>
            <person name="Delseny M."/>
            <person name="Boutry M."/>
            <person name="Grivell L.A."/>
            <person name="Mache R."/>
            <person name="Puigdomenech P."/>
            <person name="De Simone V."/>
            <person name="Choisne N."/>
            <person name="Artiguenave F."/>
            <person name="Robert C."/>
            <person name="Brottier P."/>
            <person name="Wincker P."/>
            <person name="Cattolico L."/>
            <person name="Weissenbach J."/>
            <person name="Saurin W."/>
            <person name="Quetier F."/>
            <person name="Schaefer M."/>
            <person name="Mueller-Auer S."/>
            <person name="Gabel C."/>
            <person name="Fuchs M."/>
            <person name="Benes V."/>
            <person name="Wurmbach E."/>
            <person name="Drzonek H."/>
            <person name="Erfle H."/>
            <person name="Jordan N."/>
            <person name="Bangert S."/>
            <person name="Wiedelmann R."/>
            <person name="Kranz H."/>
            <person name="Voss H."/>
            <person name="Holland R."/>
            <person name="Brandt P."/>
            <person name="Nyakatura G."/>
            <person name="Vezzi A."/>
            <person name="D'Angelo M."/>
            <person name="Pallavicini A."/>
            <person name="Toppo S."/>
            <person name="Simionati B."/>
            <person name="Conrad A."/>
            <person name="Hornischer K."/>
            <person name="Kauer G."/>
            <person name="Loehnert T.-H."/>
            <person name="Nordsiek G."/>
            <person name="Reichelt J."/>
            <person name="Scharfe M."/>
            <person name="Schoen O."/>
            <person name="Bargues M."/>
            <person name="Terol J."/>
            <person name="Climent J."/>
            <person name="Navarro P."/>
            <person name="Collado C."/>
            <person name="Perez-Perez A."/>
            <person name="Ottenwaelder B."/>
            <person name="Duchemin D."/>
            <person name="Cooke R."/>
            <person name="Laudie M."/>
            <person name="Berger-Llauro C."/>
            <person name="Purnelle B."/>
            <person name="Masuy D."/>
            <person name="de Haan M."/>
            <person name="Maarse A.C."/>
            <person name="Alcaraz J.-P."/>
            <person name="Cottet A."/>
            <person name="Casacuberta E."/>
            <person name="Monfort A."/>
            <person name="Argiriou A."/>
            <person name="Flores M."/>
            <person name="Liguori R."/>
            <person name="Vitale D."/>
            <person name="Mannhaupt G."/>
            <person name="Haase D."/>
            <person name="Schoof H."/>
            <person name="Rudd S."/>
            <person name="Zaccaria P."/>
            <person name="Mewes H.-W."/>
            <person name="Mayer K.F.X."/>
            <person name="Kaul S."/>
            <person name="Town C.D."/>
            <person name="Koo H.L."/>
            <person name="Tallon L.J."/>
            <person name="Jenkins J."/>
            <person name="Rooney T."/>
            <person name="Rizzo M."/>
            <person name="Walts A."/>
            <person name="Utterback T."/>
            <person name="Fujii C.Y."/>
            <person name="Shea T.P."/>
            <person name="Creasy T.H."/>
            <person name="Haas B."/>
            <person name="Maiti R."/>
            <person name="Wu D."/>
            <person name="Peterson J."/>
            <person name="Van Aken S."/>
            <person name="Pai G."/>
            <person name="Militscher J."/>
            <person name="Sellers P."/>
            <person name="Gill J.E."/>
            <person name="Feldblyum T.V."/>
            <person name="Preuss D."/>
            <person name="Lin X."/>
            <person name="Nierman W.C."/>
            <person name="Salzberg S.L."/>
            <person name="White O."/>
            <person name="Venter J.C."/>
            <person name="Fraser C.M."/>
            <person name="Kaneko T."/>
            <person name="Nakamura Y."/>
            <person name="Sato S."/>
            <person name="Kato T."/>
            <person name="Asamizu E."/>
            <person name="Sasamoto S."/>
            <person name="Kimura T."/>
            <person name="Idesawa K."/>
            <person name="Kawashima K."/>
            <person name="Kishida Y."/>
            <person name="Kiyokawa C."/>
            <person name="Kohara M."/>
            <person name="Matsumoto M."/>
            <person name="Matsuno A."/>
            <person name="Muraki A."/>
            <person name="Nakayama S."/>
            <person name="Nakazaki N."/>
            <person name="Shinpo S."/>
            <person name="Takeuchi C."/>
            <person name="Wada T."/>
            <person name="Watanabe A."/>
            <person name="Yamada M."/>
            <person name="Yasuda M."/>
            <person name="Tabata S."/>
        </authorList>
    </citation>
    <scope>NUCLEOTIDE SEQUENCE [LARGE SCALE GENOMIC DNA]</scope>
    <source>
        <strain>cv. Columbia</strain>
    </source>
</reference>
<reference key="3">
    <citation type="journal article" date="2017" name="Plant J.">
        <title>Araport11: a complete reannotation of the Arabidopsis thaliana reference genome.</title>
        <authorList>
            <person name="Cheng C.Y."/>
            <person name="Krishnakumar V."/>
            <person name="Chan A.P."/>
            <person name="Thibaud-Nissen F."/>
            <person name="Schobel S."/>
            <person name="Town C.D."/>
        </authorList>
    </citation>
    <scope>GENOME REANNOTATION</scope>
    <source>
        <strain>cv. Columbia</strain>
    </source>
</reference>
<reference key="4">
    <citation type="journal article" date="2003" name="Science">
        <title>Empirical analysis of transcriptional activity in the Arabidopsis genome.</title>
        <authorList>
            <person name="Yamada K."/>
            <person name="Lim J."/>
            <person name="Dale J.M."/>
            <person name="Chen H."/>
            <person name="Shinn P."/>
            <person name="Palm C.J."/>
            <person name="Southwick A.M."/>
            <person name="Wu H.C."/>
            <person name="Kim C.J."/>
            <person name="Nguyen M."/>
            <person name="Pham P.K."/>
            <person name="Cheuk R.F."/>
            <person name="Karlin-Newmann G."/>
            <person name="Liu S.X."/>
            <person name="Lam B."/>
            <person name="Sakano H."/>
            <person name="Wu T."/>
            <person name="Yu G."/>
            <person name="Miranda M."/>
            <person name="Quach H.L."/>
            <person name="Tripp M."/>
            <person name="Chang C.H."/>
            <person name="Lee J.M."/>
            <person name="Toriumi M.J."/>
            <person name="Chan M.M."/>
            <person name="Tang C.C."/>
            <person name="Onodera C.S."/>
            <person name="Deng J.M."/>
            <person name="Akiyama K."/>
            <person name="Ansari Y."/>
            <person name="Arakawa T."/>
            <person name="Banh J."/>
            <person name="Banno F."/>
            <person name="Bowser L."/>
            <person name="Brooks S.Y."/>
            <person name="Carninci P."/>
            <person name="Chao Q."/>
            <person name="Choy N."/>
            <person name="Enju A."/>
            <person name="Goldsmith A.D."/>
            <person name="Gurjal M."/>
            <person name="Hansen N.F."/>
            <person name="Hayashizaki Y."/>
            <person name="Johnson-Hopson C."/>
            <person name="Hsuan V.W."/>
            <person name="Iida K."/>
            <person name="Karnes M."/>
            <person name="Khan S."/>
            <person name="Koesema E."/>
            <person name="Ishida J."/>
            <person name="Jiang P.X."/>
            <person name="Jones T."/>
            <person name="Kawai J."/>
            <person name="Kamiya A."/>
            <person name="Meyers C."/>
            <person name="Nakajima M."/>
            <person name="Narusaka M."/>
            <person name="Seki M."/>
            <person name="Sakurai T."/>
            <person name="Satou M."/>
            <person name="Tamse R."/>
            <person name="Vaysberg M."/>
            <person name="Wallender E.K."/>
            <person name="Wong C."/>
            <person name="Yamamura Y."/>
            <person name="Yuan S."/>
            <person name="Shinozaki K."/>
            <person name="Davis R.W."/>
            <person name="Theologis A."/>
            <person name="Ecker J.R."/>
        </authorList>
    </citation>
    <scope>NUCLEOTIDE SEQUENCE [LARGE SCALE MRNA]</scope>
    <source>
        <strain>cv. Columbia</strain>
    </source>
</reference>
<reference key="5">
    <citation type="journal article" date="2002" name="Genome Biol.">
        <title>Evaluation and classification of RING-finger domains encoded by the Arabidopsis genome.</title>
        <authorList>
            <person name="Kosarev P."/>
            <person name="Mayer K.F.X."/>
            <person name="Hardtke C.S."/>
        </authorList>
    </citation>
    <scope>GENE FAMILY ORGANIZATION</scope>
</reference>
<reference key="6">
    <citation type="journal article" date="2006" name="J. Mol. Evol.">
        <title>The ATL gene family from Arabidopsis thaliana and Oryza sativa comprises a large number of putative ubiquitin ligases of the RING-H2 type.</title>
        <authorList>
            <person name="Serrano M."/>
            <person name="Parra S."/>
            <person name="Alcaraz L.D."/>
            <person name="Guzman P."/>
        </authorList>
    </citation>
    <scope>NOMENCLATURE</scope>
    <scope>GENE FAMILY ORGANIZATION</scope>
</reference>
<gene>
    <name type="primary">ATL5</name>
    <name type="ordered locus">At3g62690</name>
    <name type="ORF">F26K9_120</name>
</gene>
<dbReference type="EC" id="2.3.2.27" evidence="5"/>
<dbReference type="EMBL" id="AF132015">
    <property type="protein sequence ID" value="AAD33583.1"/>
    <property type="molecule type" value="mRNA"/>
</dbReference>
<dbReference type="EMBL" id="AL162651">
    <property type="protein sequence ID" value="CAB83119.1"/>
    <property type="molecule type" value="Genomic_DNA"/>
</dbReference>
<dbReference type="EMBL" id="CP002686">
    <property type="protein sequence ID" value="AEE80380.1"/>
    <property type="molecule type" value="Genomic_DNA"/>
</dbReference>
<dbReference type="EMBL" id="BT009649">
    <property type="protein sequence ID" value="AAP75799.1"/>
    <property type="molecule type" value="mRNA"/>
</dbReference>
<dbReference type="PIR" id="T48058">
    <property type="entry name" value="T48058"/>
</dbReference>
<dbReference type="RefSeq" id="NP_191828.1">
    <property type="nucleotide sequence ID" value="NM_116134.5"/>
</dbReference>
<dbReference type="SMR" id="Q9LZJ6"/>
<dbReference type="BioGRID" id="10757">
    <property type="interactions" value="2"/>
</dbReference>
<dbReference type="FunCoup" id="Q9LZJ6">
    <property type="interactions" value="36"/>
</dbReference>
<dbReference type="IntAct" id="Q9LZJ6">
    <property type="interactions" value="2"/>
</dbReference>
<dbReference type="STRING" id="3702.Q9LZJ6"/>
<dbReference type="GlyGen" id="Q9LZJ6">
    <property type="glycosylation" value="1 site"/>
</dbReference>
<dbReference type="PaxDb" id="3702-AT3G62690.1"/>
<dbReference type="ProteomicsDB" id="246640"/>
<dbReference type="EnsemblPlants" id="AT3G62690.1">
    <property type="protein sequence ID" value="AT3G62690.1"/>
    <property type="gene ID" value="AT3G62690"/>
</dbReference>
<dbReference type="GeneID" id="825443"/>
<dbReference type="Gramene" id="AT3G62690.1">
    <property type="protein sequence ID" value="AT3G62690.1"/>
    <property type="gene ID" value="AT3G62690"/>
</dbReference>
<dbReference type="KEGG" id="ath:AT3G62690"/>
<dbReference type="Araport" id="AT3G62690"/>
<dbReference type="TAIR" id="AT3G62690">
    <property type="gene designation" value="ATL5"/>
</dbReference>
<dbReference type="eggNOG" id="KOG0800">
    <property type="taxonomic scope" value="Eukaryota"/>
</dbReference>
<dbReference type="HOGENOM" id="CLU_066543_0_0_1"/>
<dbReference type="InParanoid" id="Q9LZJ6"/>
<dbReference type="OMA" id="WGNMNHG"/>
<dbReference type="OrthoDB" id="8062037at2759"/>
<dbReference type="PhylomeDB" id="Q9LZJ6"/>
<dbReference type="UniPathway" id="UPA00143"/>
<dbReference type="PRO" id="PR:Q9LZJ6"/>
<dbReference type="Proteomes" id="UP000006548">
    <property type="component" value="Chromosome 3"/>
</dbReference>
<dbReference type="ExpressionAtlas" id="Q9LZJ6">
    <property type="expression patterns" value="baseline and differential"/>
</dbReference>
<dbReference type="GO" id="GO:0016020">
    <property type="term" value="C:membrane"/>
    <property type="evidence" value="ECO:0000250"/>
    <property type="project" value="TAIR"/>
</dbReference>
<dbReference type="GO" id="GO:0016740">
    <property type="term" value="F:transferase activity"/>
    <property type="evidence" value="ECO:0007669"/>
    <property type="project" value="UniProtKB-KW"/>
</dbReference>
<dbReference type="GO" id="GO:0008270">
    <property type="term" value="F:zinc ion binding"/>
    <property type="evidence" value="ECO:0007669"/>
    <property type="project" value="UniProtKB-KW"/>
</dbReference>
<dbReference type="GO" id="GO:0016567">
    <property type="term" value="P:protein ubiquitination"/>
    <property type="evidence" value="ECO:0007669"/>
    <property type="project" value="UniProtKB-UniPathway"/>
</dbReference>
<dbReference type="GO" id="GO:0065003">
    <property type="term" value="P:protein-containing complex assembly"/>
    <property type="evidence" value="ECO:0000304"/>
    <property type="project" value="TAIR"/>
</dbReference>
<dbReference type="CDD" id="cd16461">
    <property type="entry name" value="RING-H2_EL5-like"/>
    <property type="match status" value="1"/>
</dbReference>
<dbReference type="FunFam" id="3.30.40.10:FF:000522">
    <property type="entry name" value="RING-H2 finger protein ATL5"/>
    <property type="match status" value="1"/>
</dbReference>
<dbReference type="Gene3D" id="3.30.40.10">
    <property type="entry name" value="Zinc/RING finger domain, C3HC4 (zinc finger)"/>
    <property type="match status" value="1"/>
</dbReference>
<dbReference type="InterPro" id="IPR044600">
    <property type="entry name" value="ATL1/ATL16-like"/>
</dbReference>
<dbReference type="InterPro" id="IPR001841">
    <property type="entry name" value="Znf_RING"/>
</dbReference>
<dbReference type="InterPro" id="IPR013083">
    <property type="entry name" value="Znf_RING/FYVE/PHD"/>
</dbReference>
<dbReference type="PANTHER" id="PTHR46913">
    <property type="entry name" value="RING-H2 FINGER PROTEIN ATL16"/>
    <property type="match status" value="1"/>
</dbReference>
<dbReference type="PANTHER" id="PTHR46913:SF1">
    <property type="entry name" value="RING-H2 FINGER PROTEIN ATL16"/>
    <property type="match status" value="1"/>
</dbReference>
<dbReference type="Pfam" id="PF13639">
    <property type="entry name" value="zf-RING_2"/>
    <property type="match status" value="1"/>
</dbReference>
<dbReference type="SMART" id="SM00184">
    <property type="entry name" value="RING"/>
    <property type="match status" value="1"/>
</dbReference>
<dbReference type="SUPFAM" id="SSF57850">
    <property type="entry name" value="RING/U-box"/>
    <property type="match status" value="1"/>
</dbReference>
<dbReference type="PROSITE" id="PS50089">
    <property type="entry name" value="ZF_RING_2"/>
    <property type="match status" value="1"/>
</dbReference>
<sequence>MGNLFDSSKTLWGNMNHGSSRYSLNGKIMLASVIILFVAVILILCFHSYARWLFRRQNRRIRRRISAHLRSLAAARDPTQSSSSLSPLDPTVLEKIPIFVYSVKTHESPLEECSVCLSEFEEDDEGRVLPKCGHVFHVDCIDTWFRSRSSCPLCRAPVQPAQPVTEPEPVAAVFPSVKPIEDTEAGSSSSSDESESSTPSSSSGSPVRFPMEACEREPIDLVGIIVEIPREFQDSNSDLPADNGSNRRASLKRLWII</sequence>
<keyword id="KW-0472">Membrane</keyword>
<keyword id="KW-0479">Metal-binding</keyword>
<keyword id="KW-1185">Reference proteome</keyword>
<keyword id="KW-0808">Transferase</keyword>
<keyword id="KW-0812">Transmembrane</keyword>
<keyword id="KW-1133">Transmembrane helix</keyword>
<keyword id="KW-0833">Ubl conjugation pathway</keyword>
<keyword id="KW-0862">Zinc</keyword>
<keyword id="KW-0863">Zinc-finger</keyword>
<name>ATL5_ARATH</name>
<evidence type="ECO:0000250" key="1"/>
<evidence type="ECO:0000255" key="2"/>
<evidence type="ECO:0000255" key="3">
    <source>
        <dbReference type="PROSITE-ProRule" id="PRU00175"/>
    </source>
</evidence>
<evidence type="ECO:0000256" key="4">
    <source>
        <dbReference type="SAM" id="MobiDB-lite"/>
    </source>
</evidence>
<evidence type="ECO:0000305" key="5"/>
<comment type="catalytic activity">
    <reaction evidence="5">
        <text>S-ubiquitinyl-[E2 ubiquitin-conjugating enzyme]-L-cysteine + [acceptor protein]-L-lysine = [E2 ubiquitin-conjugating enzyme]-L-cysteine + N(6)-ubiquitinyl-[acceptor protein]-L-lysine.</text>
        <dbReference type="EC" id="2.3.2.27"/>
    </reaction>
</comment>
<comment type="pathway">
    <text>Protein modification; protein ubiquitination.</text>
</comment>
<comment type="subcellular location">
    <subcellularLocation>
        <location evidence="5">Membrane</location>
        <topology evidence="5">Single-pass membrane protein</topology>
    </subcellularLocation>
</comment>
<comment type="domain">
    <text evidence="1">The RING-type zinc finger domain mediates binding to an E2 ubiquitin-conjugating enzyme.</text>
</comment>
<comment type="similarity">
    <text evidence="5">Belongs to the RING-type zinc finger family. ATL subfamily.</text>
</comment>
<accession>Q9LZJ6</accession>
<accession>Q9XF64</accession>
<feature type="chain" id="PRO_0000055797" description="RING-H2 finger protein ATL5">
    <location>
        <begin position="1"/>
        <end position="257"/>
    </location>
</feature>
<feature type="transmembrane region" description="Helical" evidence="2">
    <location>
        <begin position="28"/>
        <end position="48"/>
    </location>
</feature>
<feature type="zinc finger region" description="RING-type; atypical" evidence="3">
    <location>
        <begin position="113"/>
        <end position="155"/>
    </location>
</feature>
<feature type="region of interest" description="Disordered" evidence="4">
    <location>
        <begin position="181"/>
        <end position="209"/>
    </location>
</feature>
<feature type="compositionally biased region" description="Low complexity" evidence="4">
    <location>
        <begin position="185"/>
        <end position="206"/>
    </location>
</feature>
<feature type="sequence conflict" description="In Ref. 1; AAD33583." evidence="5" ref="1">
    <original>T</original>
    <variation>A</variation>
    <location>
        <position position="91"/>
    </location>
</feature>
<feature type="sequence conflict" description="In Ref. 1; AAD33583." evidence="5" ref="1">
    <original>G</original>
    <variation>C</variation>
    <location>
        <position position="133"/>
    </location>
</feature>
<proteinExistence type="evidence at transcript level"/>
<protein>
    <recommendedName>
        <fullName>RING-H2 finger protein ATL5</fullName>
        <ecNumber evidence="5">2.3.2.27</ecNumber>
    </recommendedName>
    <alternativeName>
        <fullName evidence="5">RING-type E3 ubiquitin transferase ATL5</fullName>
    </alternativeName>
</protein>
<organism>
    <name type="scientific">Arabidopsis thaliana</name>
    <name type="common">Mouse-ear cress</name>
    <dbReference type="NCBI Taxonomy" id="3702"/>
    <lineage>
        <taxon>Eukaryota</taxon>
        <taxon>Viridiplantae</taxon>
        <taxon>Streptophyta</taxon>
        <taxon>Embryophyta</taxon>
        <taxon>Tracheophyta</taxon>
        <taxon>Spermatophyta</taxon>
        <taxon>Magnoliopsida</taxon>
        <taxon>eudicotyledons</taxon>
        <taxon>Gunneridae</taxon>
        <taxon>Pentapetalae</taxon>
        <taxon>rosids</taxon>
        <taxon>malvids</taxon>
        <taxon>Brassicales</taxon>
        <taxon>Brassicaceae</taxon>
        <taxon>Camelineae</taxon>
        <taxon>Arabidopsis</taxon>
    </lineage>
</organism>